<keyword id="KW-0963">Cytoplasm</keyword>
<keyword id="KW-1185">Reference proteome</keyword>
<sequence length="797" mass="86169">MGNSQTKESRPAASHRRSHGGAGRSPYSERHHSEGSRSRGSRPDLSILGIGGSHHERDVATLEHRRETRQEREARKLEKERIARVKERERSMREEHVDGGYLVTQGVYTGTEDFNKAIVRQLMIERRLAPFWRGLNDFSESWTEHQLMAAARGLPIPPPDEIPPELEYTNPPKATDDSKESADSKMIQHLTVPITSRSQSYGSDASQSSNPTNSLPSPASPIASGTSSSPLFRTRAKTLASLTTSKHNQVDPGPREMQLPRDPFVNGQPIEAYLYKEASECPICFLYYPPYLNRTRCCDQPICSECFVQIKRPDPHPPEHGDADSNAPAESQEGERPENQDGQLVMEPAACPFCVQPEFGVTYAPPPFRRGLTYALDPNSRPNFTSPVSSTSSLASANPATVPGRRRATSLSASDPLVITTDRIRPDWAQKLANARAHAARRSAAATALHTAAYLMNSNPTGDSRNFSLGRRGVMRRSGAVEGGNSSSRTGSPALQALAFLTDRRPAGTDTDSAEEQGNLAPPRQSSRRNRIDDLEEMMMMEAIRLSLASEEERRKREEKEAKKDAKKREKEAKKAEKAARKTGMYSNNASGSALDVPSGLGRVVSSSSSITGEEATPAGKGKEVDRVSPNAPAENDPGAAGASDAVQVPGLNSTEQHHSAPLSSAQPTSRPSHLRNVSSASSFSSLVESMSEDHPGAAEGTSSSPEPLYNFRSLAAVIGDDEKPEEAAEHVEDTLSQKAEGSGTQSVSPATDSALGGTAEIPCVTVEGDRDCLIPKELETRSVELTGATRNAEATS</sequence>
<protein>
    <recommendedName>
        <fullName>Protein sip5</fullName>
    </recommendedName>
</protein>
<evidence type="ECO:0000250" key="1"/>
<evidence type="ECO:0000256" key="2">
    <source>
        <dbReference type="SAM" id="MobiDB-lite"/>
    </source>
</evidence>
<evidence type="ECO:0000305" key="3"/>
<comment type="function">
    <text evidence="1">May negatively regulate the snf1 kinase.</text>
</comment>
<comment type="subcellular location">
    <subcellularLocation>
        <location evidence="1">Cytoplasm</location>
    </subcellularLocation>
</comment>
<comment type="similarity">
    <text evidence="3">Belongs to the SIP5 family.</text>
</comment>
<comment type="sequence caution" evidence="3">
    <conflict type="erroneous gene model prediction">
        <sequence resource="EMBL-CDS" id="EAU38675"/>
    </conflict>
</comment>
<accession>Q0D205</accession>
<gene>
    <name type="primary">sip5</name>
    <name type="ORF">ATEG_00029</name>
</gene>
<organism>
    <name type="scientific">Aspergillus terreus (strain NIH 2624 / FGSC A1156)</name>
    <dbReference type="NCBI Taxonomy" id="341663"/>
    <lineage>
        <taxon>Eukaryota</taxon>
        <taxon>Fungi</taxon>
        <taxon>Dikarya</taxon>
        <taxon>Ascomycota</taxon>
        <taxon>Pezizomycotina</taxon>
        <taxon>Eurotiomycetes</taxon>
        <taxon>Eurotiomycetidae</taxon>
        <taxon>Eurotiales</taxon>
        <taxon>Aspergillaceae</taxon>
        <taxon>Aspergillus</taxon>
        <taxon>Aspergillus subgen. Circumdati</taxon>
    </lineage>
</organism>
<name>SIP5_ASPTN</name>
<dbReference type="EMBL" id="CH476594">
    <property type="protein sequence ID" value="EAU38675.1"/>
    <property type="status" value="ALT_SEQ"/>
    <property type="molecule type" value="Genomic_DNA"/>
</dbReference>
<dbReference type="RefSeq" id="XP_001210115.1">
    <property type="nucleotide sequence ID" value="XM_001210115.1"/>
</dbReference>
<dbReference type="SMR" id="Q0D205"/>
<dbReference type="STRING" id="341663.Q0D205"/>
<dbReference type="GeneID" id="4354785"/>
<dbReference type="eggNOG" id="KOG2789">
    <property type="taxonomic scope" value="Eukaryota"/>
</dbReference>
<dbReference type="OrthoDB" id="21471at2759"/>
<dbReference type="Proteomes" id="UP000007963">
    <property type="component" value="Unassembled WGS sequence"/>
</dbReference>
<dbReference type="GO" id="GO:0005737">
    <property type="term" value="C:cytoplasm"/>
    <property type="evidence" value="ECO:0007669"/>
    <property type="project" value="UniProtKB-SubCell"/>
</dbReference>
<dbReference type="CDD" id="cd24139">
    <property type="entry name" value="SIP5-like"/>
    <property type="match status" value="1"/>
</dbReference>
<dbReference type="InterPro" id="IPR039301">
    <property type="entry name" value="Sip5/DA2"/>
</dbReference>
<dbReference type="PANTHER" id="PTHR31315">
    <property type="entry name" value="PROTEIN SIP5"/>
    <property type="match status" value="1"/>
</dbReference>
<dbReference type="PANTHER" id="PTHR31315:SF1">
    <property type="entry name" value="PROTEIN SIP5"/>
    <property type="match status" value="1"/>
</dbReference>
<feature type="chain" id="PRO_0000333430" description="Protein sip5">
    <location>
        <begin position="1"/>
        <end position="797"/>
    </location>
</feature>
<feature type="region of interest" description="Disordered" evidence="2">
    <location>
        <begin position="1"/>
        <end position="76"/>
    </location>
</feature>
<feature type="region of interest" description="Disordered" evidence="2">
    <location>
        <begin position="153"/>
        <end position="231"/>
    </location>
</feature>
<feature type="region of interest" description="Disordered" evidence="2">
    <location>
        <begin position="243"/>
        <end position="262"/>
    </location>
</feature>
<feature type="region of interest" description="Disordered" evidence="2">
    <location>
        <begin position="314"/>
        <end position="340"/>
    </location>
</feature>
<feature type="region of interest" description="Disordered" evidence="2">
    <location>
        <begin position="383"/>
        <end position="409"/>
    </location>
</feature>
<feature type="region of interest" description="Disordered" evidence="2">
    <location>
        <begin position="506"/>
        <end position="531"/>
    </location>
</feature>
<feature type="region of interest" description="Disordered" evidence="2">
    <location>
        <begin position="546"/>
        <end position="759"/>
    </location>
</feature>
<feature type="compositionally biased region" description="Basic and acidic residues" evidence="2">
    <location>
        <begin position="27"/>
        <end position="37"/>
    </location>
</feature>
<feature type="compositionally biased region" description="Basic and acidic residues" evidence="2">
    <location>
        <begin position="53"/>
        <end position="76"/>
    </location>
</feature>
<feature type="compositionally biased region" description="Basic and acidic residues" evidence="2">
    <location>
        <begin position="174"/>
        <end position="183"/>
    </location>
</feature>
<feature type="compositionally biased region" description="Low complexity" evidence="2">
    <location>
        <begin position="196"/>
        <end position="209"/>
    </location>
</feature>
<feature type="compositionally biased region" description="Polar residues" evidence="2">
    <location>
        <begin position="210"/>
        <end position="231"/>
    </location>
</feature>
<feature type="compositionally biased region" description="Basic and acidic residues" evidence="2">
    <location>
        <begin position="314"/>
        <end position="323"/>
    </location>
</feature>
<feature type="compositionally biased region" description="Low complexity" evidence="2">
    <location>
        <begin position="383"/>
        <end position="401"/>
    </location>
</feature>
<feature type="compositionally biased region" description="Basic and acidic residues" evidence="2">
    <location>
        <begin position="551"/>
        <end position="580"/>
    </location>
</feature>
<feature type="compositionally biased region" description="Polar residues" evidence="2">
    <location>
        <begin position="662"/>
        <end position="678"/>
    </location>
</feature>
<feature type="compositionally biased region" description="Low complexity" evidence="2">
    <location>
        <begin position="679"/>
        <end position="690"/>
    </location>
</feature>
<feature type="compositionally biased region" description="Basic and acidic residues" evidence="2">
    <location>
        <begin position="726"/>
        <end position="736"/>
    </location>
</feature>
<feature type="compositionally biased region" description="Polar residues" evidence="2">
    <location>
        <begin position="737"/>
        <end position="752"/>
    </location>
</feature>
<proteinExistence type="inferred from homology"/>
<reference key="1">
    <citation type="submission" date="2005-09" db="EMBL/GenBank/DDBJ databases">
        <title>Annotation of the Aspergillus terreus NIH2624 genome.</title>
        <authorList>
            <person name="Birren B.W."/>
            <person name="Lander E.S."/>
            <person name="Galagan J.E."/>
            <person name="Nusbaum C."/>
            <person name="Devon K."/>
            <person name="Henn M."/>
            <person name="Ma L.-J."/>
            <person name="Jaffe D.B."/>
            <person name="Butler J."/>
            <person name="Alvarez P."/>
            <person name="Gnerre S."/>
            <person name="Grabherr M."/>
            <person name="Kleber M."/>
            <person name="Mauceli E.W."/>
            <person name="Brockman W."/>
            <person name="Rounsley S."/>
            <person name="Young S.K."/>
            <person name="LaButti K."/>
            <person name="Pushparaj V."/>
            <person name="DeCaprio D."/>
            <person name="Crawford M."/>
            <person name="Koehrsen M."/>
            <person name="Engels R."/>
            <person name="Montgomery P."/>
            <person name="Pearson M."/>
            <person name="Howarth C."/>
            <person name="Larson L."/>
            <person name="Luoma S."/>
            <person name="White J."/>
            <person name="Alvarado L."/>
            <person name="Kodira C.D."/>
            <person name="Zeng Q."/>
            <person name="Oleary S."/>
            <person name="Yandava C."/>
            <person name="Denning D.W."/>
            <person name="Nierman W.C."/>
            <person name="Milne T."/>
            <person name="Madden K."/>
        </authorList>
    </citation>
    <scope>NUCLEOTIDE SEQUENCE [LARGE SCALE GENOMIC DNA]</scope>
    <source>
        <strain>NIH 2624 / FGSC A1156</strain>
    </source>
</reference>